<reference key="1">
    <citation type="journal article" date="2022" name="Nature">
        <title>Biosynthesis of strychnine.</title>
        <authorList>
            <person name="Hong B."/>
            <person name="Grzech D."/>
            <person name="Caputi L."/>
            <person name="Sonawane P."/>
            <person name="Lopez C.E.R."/>
            <person name="Kamileen M.O."/>
            <person name="Hernandez Lozada N.J."/>
            <person name="Grabe V."/>
            <person name="O'Connor S.E."/>
        </authorList>
    </citation>
    <scope>NUCLEOTIDE SEQUENCE [MRNA]</scope>
    <scope>FUNCTION</scope>
    <scope>CATALYTIC ACTIVITY</scope>
    <scope>PATHWAY</scope>
</reference>
<keyword id="KW-0017">Alkaloid metabolism</keyword>
<keyword id="KW-0378">Hydrolase</keyword>
<keyword id="KW-0719">Serine esterase</keyword>
<feature type="chain" id="PRO_0000461121" description="Norfluorocurarine synthase 2">
    <location>
        <begin position="1"/>
        <end position="266"/>
    </location>
</feature>
<feature type="domain" description="AB hydrolase-1" evidence="2">
    <location>
        <begin position="11"/>
        <end position="121"/>
    </location>
</feature>
<feature type="active site" evidence="1">
    <location>
        <position position="86"/>
    </location>
</feature>
<feature type="active site" evidence="1">
    <location>
        <position position="216"/>
    </location>
</feature>
<feature type="active site" evidence="1">
    <location>
        <position position="244"/>
    </location>
</feature>
<proteinExistence type="evidence at protein level"/>
<protein>
    <recommendedName>
        <fullName evidence="4">Norfluorocurarine synthase 2</fullName>
        <shortName evidence="4">SpNS2</shortName>
        <ecNumber evidence="3">3.1.1.123</ecNumber>
    </recommendedName>
</protein>
<gene>
    <name evidence="4" type="primary">NS2</name>
</gene>
<accession>P0DO90</accession>
<comment type="function">
    <text evidence="3">Hydrolase involved in the biosynthesis of curare monoterpene indole alkaloids (MIAs), natural products such as diaboline, a pharmacologically active compound used to regulate blood pressure (PubMed:35794473). Curare alkaloids act as animal glycine receptor antagonists (PubMed:35794473). Catalyzes the conversion of dehydropreakuammicine to norfluorocurarine (PubMed:35794473).</text>
</comment>
<comment type="catalytic activity">
    <reaction evidence="3">
        <text>17-dehydropreakuammicine + H2O = norfluorocurarine + methanol + CO2</text>
        <dbReference type="Rhea" id="RHEA:80899"/>
        <dbReference type="ChEBI" id="CHEBI:15377"/>
        <dbReference type="ChEBI" id="CHEBI:16526"/>
        <dbReference type="ChEBI" id="CHEBI:17790"/>
        <dbReference type="ChEBI" id="CHEBI:230469"/>
        <dbReference type="ChEBI" id="CHEBI:231650"/>
        <dbReference type="EC" id="3.1.1.123"/>
    </reaction>
    <physiologicalReaction direction="left-to-right" evidence="3">
        <dbReference type="Rhea" id="RHEA:80900"/>
    </physiologicalReaction>
</comment>
<comment type="pathway">
    <text evidence="3">Alkaloid biosynthesis.</text>
</comment>
<comment type="subunit">
    <text evidence="1">Homodimer.</text>
</comment>
<comment type="similarity">
    <text evidence="5">Belongs to the AB hydrolase superfamily.</text>
</comment>
<dbReference type="EC" id="3.1.1.123" evidence="3"/>
<dbReference type="EMBL" id="OM304301">
    <property type="protein sequence ID" value="UQZ09632.1"/>
    <property type="molecule type" value="mRNA"/>
</dbReference>
<dbReference type="SMR" id="P0DO90"/>
<dbReference type="KEGG" id="ag:UQZ09632"/>
<dbReference type="GO" id="GO:0016787">
    <property type="term" value="F:hydrolase activity"/>
    <property type="evidence" value="ECO:0000314"/>
    <property type="project" value="UniProtKB"/>
</dbReference>
<dbReference type="GO" id="GO:0080030">
    <property type="term" value="F:methyl indole-3-acetate esterase activity"/>
    <property type="evidence" value="ECO:0007669"/>
    <property type="project" value="TreeGrafter"/>
</dbReference>
<dbReference type="GO" id="GO:0080032">
    <property type="term" value="F:methyl jasmonate esterase activity"/>
    <property type="evidence" value="ECO:0007669"/>
    <property type="project" value="TreeGrafter"/>
</dbReference>
<dbReference type="GO" id="GO:0080031">
    <property type="term" value="F:methyl salicylate esterase activity"/>
    <property type="evidence" value="ECO:0007669"/>
    <property type="project" value="TreeGrafter"/>
</dbReference>
<dbReference type="GO" id="GO:0009821">
    <property type="term" value="P:alkaloid biosynthetic process"/>
    <property type="evidence" value="ECO:0000314"/>
    <property type="project" value="UniProtKB"/>
</dbReference>
<dbReference type="GO" id="GO:0009694">
    <property type="term" value="P:jasmonic acid metabolic process"/>
    <property type="evidence" value="ECO:0007669"/>
    <property type="project" value="TreeGrafter"/>
</dbReference>
<dbReference type="GO" id="GO:0009696">
    <property type="term" value="P:salicylic acid metabolic process"/>
    <property type="evidence" value="ECO:0007669"/>
    <property type="project" value="TreeGrafter"/>
</dbReference>
<dbReference type="FunFam" id="3.40.50.1820:FF:000051">
    <property type="entry name" value="(S)-hydroxynitrile lyase"/>
    <property type="match status" value="1"/>
</dbReference>
<dbReference type="Gene3D" id="3.40.50.1820">
    <property type="entry name" value="alpha/beta hydrolase"/>
    <property type="match status" value="1"/>
</dbReference>
<dbReference type="InterPro" id="IPR000073">
    <property type="entry name" value="AB_hydrolase_1"/>
</dbReference>
<dbReference type="InterPro" id="IPR029058">
    <property type="entry name" value="AB_hydrolase_fold"/>
</dbReference>
<dbReference type="InterPro" id="IPR045889">
    <property type="entry name" value="MES/HNL"/>
</dbReference>
<dbReference type="PANTHER" id="PTHR10992:SF1083">
    <property type="entry name" value="METHYLESTERASE 1"/>
    <property type="match status" value="1"/>
</dbReference>
<dbReference type="PANTHER" id="PTHR10992">
    <property type="entry name" value="METHYLESTERASE FAMILY MEMBER"/>
    <property type="match status" value="1"/>
</dbReference>
<dbReference type="Pfam" id="PF12697">
    <property type="entry name" value="Abhydrolase_6"/>
    <property type="match status" value="1"/>
</dbReference>
<dbReference type="SUPFAM" id="SSF53474">
    <property type="entry name" value="alpha/beta-Hydrolases"/>
    <property type="match status" value="1"/>
</dbReference>
<sequence length="266" mass="29627">MEVANKTQQKHFVLVHGAGHGAWCWYKLKLLLESSGHKVTAIDLATSGANPKRLDEVDTLKDYCSPLLELMAAIPQDDKVILVGHSYGGFCIALAMDLYPKKISIGVFVASVMPDSTHPPNYFINQYYKWNPVGEDSTDTKVETFGDPDQPRTVIHFGPIYLSTKLYQNCTSEEIELAKFLLRPLSVFSNDLSKLKAFSEEGYGSVRRGYIMCSEDKAVPAGLQHWLIENVGASEVKEIKGADHMPMISKPQELCQCLVEITEKVV</sequence>
<evidence type="ECO:0000250" key="1">
    <source>
        <dbReference type="UniProtKB" id="Q9SE93"/>
    </source>
</evidence>
<evidence type="ECO:0000255" key="2"/>
<evidence type="ECO:0000269" key="3">
    <source>
    </source>
</evidence>
<evidence type="ECO:0000303" key="4">
    <source>
    </source>
</evidence>
<evidence type="ECO:0000305" key="5"/>
<name>NS2_STRYX</name>
<organism>
    <name type="scientific">Strychnos sp</name>
    <dbReference type="NCBI Taxonomy" id="2946199"/>
    <lineage>
        <taxon>Eukaryota</taxon>
        <taxon>Viridiplantae</taxon>
        <taxon>Streptophyta</taxon>
        <taxon>Embryophyta</taxon>
        <taxon>Tracheophyta</taxon>
        <taxon>Spermatophyta</taxon>
        <taxon>Magnoliopsida</taxon>
        <taxon>eudicotyledons</taxon>
        <taxon>Gunneridae</taxon>
        <taxon>Pentapetalae</taxon>
        <taxon>asterids</taxon>
        <taxon>lamiids</taxon>
        <taxon>Gentianales</taxon>
        <taxon>Loganiaceae</taxon>
        <taxon>Strychnos</taxon>
    </lineage>
</organism>